<comment type="function">
    <text evidence="1">Member of a network of 50S ribosomal subunit biogenesis factors which assembles along the 30S-50S interface, preventing incorrect 23S rRNA structures from forming. Promotes peptidyl transferase center (PTC) maturation.</text>
</comment>
<comment type="subcellular location">
    <subcellularLocation>
        <location evidence="1">Cytoplasm</location>
    </subcellularLocation>
    <text evidence="1">Associates with late stage pre-50S ribosomal subunits.</text>
</comment>
<comment type="similarity">
    <text evidence="1">Belongs to the DarP family.</text>
</comment>
<keyword id="KW-0963">Cytoplasm</keyword>
<keyword id="KW-0690">Ribosome biogenesis</keyword>
<keyword id="KW-0694">RNA-binding</keyword>
<keyword id="KW-0699">rRNA-binding</keyword>
<accession>B4EAM5</accession>
<evidence type="ECO:0000255" key="1">
    <source>
        <dbReference type="HAMAP-Rule" id="MF_00765"/>
    </source>
</evidence>
<evidence type="ECO:0000256" key="2">
    <source>
        <dbReference type="SAM" id="MobiDB-lite"/>
    </source>
</evidence>
<sequence>MRPMTRKTRIQPIEHAVEDDDNGYDRPSKSQLKREMHALQELGQALVDLPKDALKRMPMPEDLADAVREARRITDHEGKRRQLQYVGRVMRSLTDDETAALRTALDAQRGVNKAATARLHWIERTREQLLASDDALTEFLRQHPDADIQEGRTLIRNARKEAQQGKPPRYFRELFQWIKAAGGASDSDDEAAGDAGDDHDDEA</sequence>
<reference key="1">
    <citation type="journal article" date="2009" name="J. Bacteriol.">
        <title>The genome of Burkholderia cenocepacia J2315, an epidemic pathogen of cystic fibrosis patients.</title>
        <authorList>
            <person name="Holden M.T."/>
            <person name="Seth-Smith H.M."/>
            <person name="Crossman L.C."/>
            <person name="Sebaihia M."/>
            <person name="Bentley S.D."/>
            <person name="Cerdeno-Tarraga A.M."/>
            <person name="Thomson N.R."/>
            <person name="Bason N."/>
            <person name="Quail M.A."/>
            <person name="Sharp S."/>
            <person name="Cherevach I."/>
            <person name="Churcher C."/>
            <person name="Goodhead I."/>
            <person name="Hauser H."/>
            <person name="Holroyd N."/>
            <person name="Mungall K."/>
            <person name="Scott P."/>
            <person name="Walker D."/>
            <person name="White B."/>
            <person name="Rose H."/>
            <person name="Iversen P."/>
            <person name="Mil-Homens D."/>
            <person name="Rocha E.P."/>
            <person name="Fialho A.M."/>
            <person name="Baldwin A."/>
            <person name="Dowson C."/>
            <person name="Barrell B.G."/>
            <person name="Govan J.R."/>
            <person name="Vandamme P."/>
            <person name="Hart C.A."/>
            <person name="Mahenthiralingam E."/>
            <person name="Parkhill J."/>
        </authorList>
    </citation>
    <scope>NUCLEOTIDE SEQUENCE [LARGE SCALE GENOMIC DNA]</scope>
    <source>
        <strain>ATCC BAA-245 / DSM 16553 / LMG 16656 / NCTC 13227 / J2315 / CF5610</strain>
    </source>
</reference>
<name>DARP_BURCJ</name>
<gene>
    <name evidence="1" type="primary">darP</name>
    <name type="ordered locus">BceJ2315_28530</name>
    <name type="ORF">BCAL2917</name>
</gene>
<protein>
    <recommendedName>
        <fullName evidence="1">Dual-action ribosomal maturation protein DarP</fullName>
    </recommendedName>
    <alternativeName>
        <fullName evidence="1">Large ribosomal subunit assembly factor DarP</fullName>
    </alternativeName>
</protein>
<feature type="chain" id="PRO_1000198376" description="Dual-action ribosomal maturation protein DarP">
    <location>
        <begin position="1"/>
        <end position="203"/>
    </location>
</feature>
<feature type="region of interest" description="Disordered" evidence="2">
    <location>
        <begin position="1"/>
        <end position="31"/>
    </location>
</feature>
<feature type="region of interest" description="Disordered" evidence="2">
    <location>
        <begin position="183"/>
        <end position="203"/>
    </location>
</feature>
<feature type="compositionally biased region" description="Acidic residues" evidence="2">
    <location>
        <begin position="186"/>
        <end position="203"/>
    </location>
</feature>
<dbReference type="EMBL" id="AM747720">
    <property type="protein sequence ID" value="CAR53216.1"/>
    <property type="molecule type" value="Genomic_DNA"/>
</dbReference>
<dbReference type="SMR" id="B4EAM5"/>
<dbReference type="KEGG" id="bcj:BCAL2917"/>
<dbReference type="eggNOG" id="COG3028">
    <property type="taxonomic scope" value="Bacteria"/>
</dbReference>
<dbReference type="HOGENOM" id="CLU_106757_1_0_4"/>
<dbReference type="BioCyc" id="BCEN216591:G1G1V-3226-MONOMER"/>
<dbReference type="Proteomes" id="UP000001035">
    <property type="component" value="Chromosome 1"/>
</dbReference>
<dbReference type="GO" id="GO:0005829">
    <property type="term" value="C:cytosol"/>
    <property type="evidence" value="ECO:0007669"/>
    <property type="project" value="TreeGrafter"/>
</dbReference>
<dbReference type="GO" id="GO:0043022">
    <property type="term" value="F:ribosome binding"/>
    <property type="evidence" value="ECO:0007669"/>
    <property type="project" value="UniProtKB-UniRule"/>
</dbReference>
<dbReference type="GO" id="GO:0019843">
    <property type="term" value="F:rRNA binding"/>
    <property type="evidence" value="ECO:0007669"/>
    <property type="project" value="UniProtKB-UniRule"/>
</dbReference>
<dbReference type="GO" id="GO:1902626">
    <property type="term" value="P:assembly of large subunit precursor of preribosome"/>
    <property type="evidence" value="ECO:0007669"/>
    <property type="project" value="UniProtKB-UniRule"/>
</dbReference>
<dbReference type="CDD" id="cd16331">
    <property type="entry name" value="YjgA-like"/>
    <property type="match status" value="1"/>
</dbReference>
<dbReference type="Gene3D" id="1.10.60.30">
    <property type="entry name" value="PSPTO4464-like domains"/>
    <property type="match status" value="2"/>
</dbReference>
<dbReference type="HAMAP" id="MF_00765">
    <property type="entry name" value="DarP"/>
    <property type="match status" value="1"/>
</dbReference>
<dbReference type="InterPro" id="IPR006839">
    <property type="entry name" value="DarP"/>
</dbReference>
<dbReference type="InterPro" id="IPR023153">
    <property type="entry name" value="DarP_sf"/>
</dbReference>
<dbReference type="NCBIfam" id="NF003593">
    <property type="entry name" value="PRK05255.1-1"/>
    <property type="match status" value="1"/>
</dbReference>
<dbReference type="PANTHER" id="PTHR38101">
    <property type="entry name" value="UPF0307 PROTEIN YJGA"/>
    <property type="match status" value="1"/>
</dbReference>
<dbReference type="PANTHER" id="PTHR38101:SF1">
    <property type="entry name" value="UPF0307 PROTEIN YJGA"/>
    <property type="match status" value="1"/>
</dbReference>
<dbReference type="Pfam" id="PF04751">
    <property type="entry name" value="DarP"/>
    <property type="match status" value="1"/>
</dbReference>
<dbReference type="PIRSF" id="PIRSF016183">
    <property type="entry name" value="UCP016183"/>
    <property type="match status" value="1"/>
</dbReference>
<dbReference type="SUPFAM" id="SSF158710">
    <property type="entry name" value="PSPTO4464-like"/>
    <property type="match status" value="1"/>
</dbReference>
<proteinExistence type="inferred from homology"/>
<organism>
    <name type="scientific">Burkholderia cenocepacia (strain ATCC BAA-245 / DSM 16553 / LMG 16656 / NCTC 13227 / J2315 / CF5610)</name>
    <name type="common">Burkholderia cepacia (strain J2315)</name>
    <dbReference type="NCBI Taxonomy" id="216591"/>
    <lineage>
        <taxon>Bacteria</taxon>
        <taxon>Pseudomonadati</taxon>
        <taxon>Pseudomonadota</taxon>
        <taxon>Betaproteobacteria</taxon>
        <taxon>Burkholderiales</taxon>
        <taxon>Burkholderiaceae</taxon>
        <taxon>Burkholderia</taxon>
        <taxon>Burkholderia cepacia complex</taxon>
    </lineage>
</organism>